<feature type="chain" id="PRO_0000138106" description="UPF0104 membrane protein MTH_378">
    <location>
        <begin position="1"/>
        <end position="334"/>
    </location>
</feature>
<feature type="transmembrane region" description="Helical" evidence="1">
    <location>
        <begin position="7"/>
        <end position="27"/>
    </location>
</feature>
<feature type="transmembrane region" description="Helical" evidence="1">
    <location>
        <begin position="33"/>
        <end position="53"/>
    </location>
</feature>
<feature type="transmembrane region" description="Helical" evidence="1">
    <location>
        <begin position="120"/>
        <end position="140"/>
    </location>
</feature>
<feature type="transmembrane region" description="Helical" evidence="1">
    <location>
        <begin position="142"/>
        <end position="162"/>
    </location>
</feature>
<feature type="transmembrane region" description="Helical" evidence="1">
    <location>
        <begin position="218"/>
        <end position="238"/>
    </location>
</feature>
<feature type="transmembrane region" description="Helical" evidence="1">
    <location>
        <begin position="247"/>
        <end position="267"/>
    </location>
</feature>
<feature type="transmembrane region" description="Helical" evidence="1">
    <location>
        <begin position="277"/>
        <end position="297"/>
    </location>
</feature>
<feature type="transmembrane region" description="Helical" evidence="1">
    <location>
        <begin position="300"/>
        <end position="320"/>
    </location>
</feature>
<dbReference type="EMBL" id="AE000666">
    <property type="protein sequence ID" value="AAB84884.1"/>
    <property type="molecule type" value="Genomic_DNA"/>
</dbReference>
<dbReference type="PIR" id="H69148">
    <property type="entry name" value="H69148"/>
</dbReference>
<dbReference type="STRING" id="187420.MTH_378"/>
<dbReference type="PaxDb" id="187420-MTH_378"/>
<dbReference type="EnsemblBacteria" id="AAB84884">
    <property type="protein sequence ID" value="AAB84884"/>
    <property type="gene ID" value="MTH_378"/>
</dbReference>
<dbReference type="KEGG" id="mth:MTH_378"/>
<dbReference type="PATRIC" id="fig|187420.15.peg.347"/>
<dbReference type="HOGENOM" id="CLU_048072_1_1_2"/>
<dbReference type="InParanoid" id="O26478"/>
<dbReference type="Proteomes" id="UP000005223">
    <property type="component" value="Chromosome"/>
</dbReference>
<dbReference type="GO" id="GO:0005886">
    <property type="term" value="C:plasma membrane"/>
    <property type="evidence" value="ECO:0007669"/>
    <property type="project" value="UniProtKB-SubCell"/>
</dbReference>
<dbReference type="InterPro" id="IPR022791">
    <property type="entry name" value="L-PG_synthase/AglD"/>
</dbReference>
<dbReference type="NCBIfam" id="TIGR00374">
    <property type="entry name" value="flippase-like domain"/>
    <property type="match status" value="1"/>
</dbReference>
<dbReference type="PANTHER" id="PTHR39087">
    <property type="entry name" value="UPF0104 MEMBRANE PROTEIN MJ1595"/>
    <property type="match status" value="1"/>
</dbReference>
<dbReference type="PANTHER" id="PTHR39087:SF2">
    <property type="entry name" value="UPF0104 MEMBRANE PROTEIN MJ1595"/>
    <property type="match status" value="1"/>
</dbReference>
<dbReference type="Pfam" id="PF03706">
    <property type="entry name" value="LPG_synthase_TM"/>
    <property type="match status" value="1"/>
</dbReference>
<name>Y378_METTH</name>
<reference key="1">
    <citation type="journal article" date="1997" name="J. Bacteriol.">
        <title>Complete genome sequence of Methanobacterium thermoautotrophicum deltaH: functional analysis and comparative genomics.</title>
        <authorList>
            <person name="Smith D.R."/>
            <person name="Doucette-Stamm L.A."/>
            <person name="Deloughery C."/>
            <person name="Lee H.-M."/>
            <person name="Dubois J."/>
            <person name="Aldredge T."/>
            <person name="Bashirzadeh R."/>
            <person name="Blakely D."/>
            <person name="Cook R."/>
            <person name="Gilbert K."/>
            <person name="Harrison D."/>
            <person name="Hoang L."/>
            <person name="Keagle P."/>
            <person name="Lumm W."/>
            <person name="Pothier B."/>
            <person name="Qiu D."/>
            <person name="Spadafora R."/>
            <person name="Vicare R."/>
            <person name="Wang Y."/>
            <person name="Wierzbowski J."/>
            <person name="Gibson R."/>
            <person name="Jiwani N."/>
            <person name="Caruso A."/>
            <person name="Bush D."/>
            <person name="Safer H."/>
            <person name="Patwell D."/>
            <person name="Prabhakar S."/>
            <person name="McDougall S."/>
            <person name="Shimer G."/>
            <person name="Goyal A."/>
            <person name="Pietrovski S."/>
            <person name="Church G.M."/>
            <person name="Daniels C.J."/>
            <person name="Mao J.-I."/>
            <person name="Rice P."/>
            <person name="Noelling J."/>
            <person name="Reeve J.N."/>
        </authorList>
    </citation>
    <scope>NUCLEOTIDE SEQUENCE [LARGE SCALE GENOMIC DNA]</scope>
    <source>
        <strain>ATCC 29096 / DSM 1053 / JCM 10044 / NBRC 100330 / Delta H</strain>
    </source>
</reference>
<protein>
    <recommendedName>
        <fullName>UPF0104 membrane protein MTH_378</fullName>
    </recommendedName>
</protein>
<comment type="subcellular location">
    <subcellularLocation>
        <location evidence="2">Cell membrane</location>
        <topology evidence="2">Multi-pass membrane protein</topology>
    </subcellularLocation>
</comment>
<comment type="similarity">
    <text evidence="2">Belongs to the UPF0104 family.</text>
</comment>
<accession>O26478</accession>
<organism>
    <name type="scientific">Methanothermobacter thermautotrophicus (strain ATCC 29096 / DSM 1053 / JCM 10044 / NBRC 100330 / Delta H)</name>
    <name type="common">Methanobacterium thermoautotrophicum</name>
    <dbReference type="NCBI Taxonomy" id="187420"/>
    <lineage>
        <taxon>Archaea</taxon>
        <taxon>Methanobacteriati</taxon>
        <taxon>Methanobacteriota</taxon>
        <taxon>Methanomada group</taxon>
        <taxon>Methanobacteria</taxon>
        <taxon>Methanobacteriales</taxon>
        <taxon>Methanobacteriaceae</taxon>
        <taxon>Methanothermobacter</taxon>
    </lineage>
</organism>
<sequence>MDSMKRFYFFALSILLILALIIWMGPSRIIRAVYMADWMIIAIALLIHMGVLAVRGLRWGFIIGQPWRMRVNFMVKTIGLFAGNLSPMRSAGEVMNALAGKKLNGIELSEGLSAGLTERFFDLGIGGGLLLLAAVMVPVIRVIALFGAILSVLITYLIYLVNWREEKGLRIYQRIHSIIERLPVSEETLENLYERLTSGIKGMIGYTRSYSNFTSLGVIFILSLLSWLMECLRLYLVFMAFGVETSFSAVIIIFLLANLVGILSALPGGMGSMEVSMAGLFVVFGVPGFLAGSIALVDRIISFWMVTALGAIFSSCYAGEIFDEVRSYILDIRA</sequence>
<evidence type="ECO:0000255" key="1"/>
<evidence type="ECO:0000305" key="2"/>
<gene>
    <name type="ordered locus">MTH_378</name>
</gene>
<proteinExistence type="inferred from homology"/>
<keyword id="KW-1003">Cell membrane</keyword>
<keyword id="KW-0472">Membrane</keyword>
<keyword id="KW-1185">Reference proteome</keyword>
<keyword id="KW-0812">Transmembrane</keyword>
<keyword id="KW-1133">Transmembrane helix</keyword>